<dbReference type="EMBL" id="BC114858">
    <property type="protein sequence ID" value="AAI14859.1"/>
    <property type="molecule type" value="mRNA"/>
</dbReference>
<dbReference type="RefSeq" id="NP_001069435.1">
    <property type="nucleotide sequence ID" value="NM_001075967.1"/>
</dbReference>
<dbReference type="SMR" id="Q1RMJ7"/>
<dbReference type="FunCoup" id="Q1RMJ7">
    <property type="interactions" value="4687"/>
</dbReference>
<dbReference type="STRING" id="9913.ENSBTAP00000013718"/>
<dbReference type="PaxDb" id="9913-ENSBTAP00000013718"/>
<dbReference type="Ensembl" id="ENSBTAT00000013718.4">
    <property type="protein sequence ID" value="ENSBTAP00000013718.3"/>
    <property type="gene ID" value="ENSBTAG00000010393.5"/>
</dbReference>
<dbReference type="GeneID" id="532582"/>
<dbReference type="KEGG" id="bta:532582"/>
<dbReference type="CTD" id="54952"/>
<dbReference type="VEuPathDB" id="HostDB:ENSBTAG00000010393"/>
<dbReference type="VGNC" id="VGNC:52838">
    <property type="gene designation" value="TRNAU1AP"/>
</dbReference>
<dbReference type="eggNOG" id="KOG0118">
    <property type="taxonomic scope" value="Eukaryota"/>
</dbReference>
<dbReference type="GeneTree" id="ENSGT00940000156139"/>
<dbReference type="HOGENOM" id="CLU_016304_3_0_1"/>
<dbReference type="InParanoid" id="Q1RMJ7"/>
<dbReference type="OMA" id="YDMNGYV"/>
<dbReference type="OrthoDB" id="446113at2759"/>
<dbReference type="TreeFam" id="TF313275"/>
<dbReference type="Proteomes" id="UP000009136">
    <property type="component" value="Chromosome 2"/>
</dbReference>
<dbReference type="Bgee" id="ENSBTAG00000010393">
    <property type="expression patterns" value="Expressed in semen and 108 other cell types or tissues"/>
</dbReference>
<dbReference type="GO" id="GO:0005737">
    <property type="term" value="C:cytoplasm"/>
    <property type="evidence" value="ECO:0007669"/>
    <property type="project" value="UniProtKB-SubCell"/>
</dbReference>
<dbReference type="GO" id="GO:0005634">
    <property type="term" value="C:nucleus"/>
    <property type="evidence" value="ECO:0000318"/>
    <property type="project" value="GO_Central"/>
</dbReference>
<dbReference type="GO" id="GO:0000049">
    <property type="term" value="F:tRNA binding"/>
    <property type="evidence" value="ECO:0000318"/>
    <property type="project" value="GO_Central"/>
</dbReference>
<dbReference type="GO" id="GO:0001514">
    <property type="term" value="P:selenocysteine incorporation"/>
    <property type="evidence" value="ECO:0000318"/>
    <property type="project" value="GO_Central"/>
</dbReference>
<dbReference type="CDD" id="cd12610">
    <property type="entry name" value="RRM1_SECp43"/>
    <property type="match status" value="1"/>
</dbReference>
<dbReference type="CDD" id="cd12612">
    <property type="entry name" value="RRM2_SECp43"/>
    <property type="match status" value="1"/>
</dbReference>
<dbReference type="FunFam" id="3.30.70.330:FF:000166">
    <property type="entry name" value="Trna selenocysteine 1-associated protein 1"/>
    <property type="match status" value="1"/>
</dbReference>
<dbReference type="FunFam" id="3.30.70.330:FF:000159">
    <property type="entry name" value="tRNA selenocysteine 1-associated protein 1"/>
    <property type="match status" value="1"/>
</dbReference>
<dbReference type="Gene3D" id="3.30.70.330">
    <property type="match status" value="2"/>
</dbReference>
<dbReference type="InterPro" id="IPR012677">
    <property type="entry name" value="Nucleotide-bd_a/b_plait_sf"/>
</dbReference>
<dbReference type="InterPro" id="IPR035979">
    <property type="entry name" value="RBD_domain_sf"/>
</dbReference>
<dbReference type="InterPro" id="IPR000504">
    <property type="entry name" value="RRM_dom"/>
</dbReference>
<dbReference type="InterPro" id="IPR034510">
    <property type="entry name" value="SECp43_RRM2"/>
</dbReference>
<dbReference type="InterPro" id="IPR040434">
    <property type="entry name" value="TSAP1"/>
</dbReference>
<dbReference type="InterPro" id="IPR041085">
    <property type="entry name" value="TSAP1_C"/>
</dbReference>
<dbReference type="PANTHER" id="PTHR37457:SF2">
    <property type="entry name" value="TRNA SELENOCYSTEINE 1-ASSOCIATED PROTEIN 1"/>
    <property type="match status" value="1"/>
</dbReference>
<dbReference type="PANTHER" id="PTHR37457">
    <property type="entry name" value="TRNA SELENOCYSTEINE 1-ASSOCIATED PROTEIN 1-RELATED"/>
    <property type="match status" value="1"/>
</dbReference>
<dbReference type="Pfam" id="PF00076">
    <property type="entry name" value="RRM_1"/>
    <property type="match status" value="2"/>
</dbReference>
<dbReference type="Pfam" id="PF17654">
    <property type="entry name" value="Trnau1ap"/>
    <property type="match status" value="1"/>
</dbReference>
<dbReference type="SMART" id="SM00360">
    <property type="entry name" value="RRM"/>
    <property type="match status" value="2"/>
</dbReference>
<dbReference type="SUPFAM" id="SSF54928">
    <property type="entry name" value="RNA-binding domain, RBD"/>
    <property type="match status" value="1"/>
</dbReference>
<dbReference type="PROSITE" id="PS50102">
    <property type="entry name" value="RRM"/>
    <property type="match status" value="2"/>
</dbReference>
<comment type="function">
    <text evidence="1">Involved in the early steps of selenocysteine biosynthesis and tRNA(Sec) charging to the later steps resulting in the cotranslational incorporation of selenocysteine into selenoproteins. Stabilizes the SECISBP2, EEFSEC and tRNA(Sec) complex. May be involved in the methylation of tRNA(Sec). Enhances efficiency of selenoproteins synthesis (By similarity).</text>
</comment>
<comment type="subunit">
    <text evidence="1">Component of the tRNA(Sec) complex composed at least of EEFSEC, SECISBP2, SEPHS1, SEPSECS, TRNAU1AP and tRNA(Sec). Found in a complex with tRNA(Sec). Interacts with SEPSECS. Associates with mRNP and/or polysomes. Found in a complex with EEFSEC, SECISBP2, TRNAU1AP and tRNA(Sec) (By similarity).</text>
</comment>
<comment type="subcellular location">
    <subcellularLocation>
        <location evidence="1">Nucleus</location>
    </subcellularLocation>
    <subcellularLocation>
        <location evidence="1">Cytoplasm</location>
    </subcellularLocation>
    <text evidence="1">Abundant in the nucleus.</text>
</comment>
<comment type="similarity">
    <text evidence="3">Belongs to the RRM TRSPAP family.</text>
</comment>
<accession>Q1RMJ7</accession>
<feature type="chain" id="PRO_0000304916" description="tRNA selenocysteine 1-associated protein 1">
    <location>
        <begin position="1"/>
        <end position="287"/>
    </location>
</feature>
<feature type="domain" description="RRM 1" evidence="2">
    <location>
        <begin position="3"/>
        <end position="86"/>
    </location>
</feature>
<feature type="domain" description="RRM 2" evidence="2">
    <location>
        <begin position="96"/>
        <end position="175"/>
    </location>
</feature>
<name>TSAP1_BOVIN</name>
<protein>
    <recommendedName>
        <fullName>tRNA selenocysteine 1-associated protein 1</fullName>
    </recommendedName>
    <alternativeName>
        <fullName>tRNA selenocysteine-associated protein 1</fullName>
    </alternativeName>
</protein>
<gene>
    <name type="primary">TRNAU1AP</name>
    <name type="synonym">TRSPAP1</name>
</gene>
<organism>
    <name type="scientific">Bos taurus</name>
    <name type="common">Bovine</name>
    <dbReference type="NCBI Taxonomy" id="9913"/>
    <lineage>
        <taxon>Eukaryota</taxon>
        <taxon>Metazoa</taxon>
        <taxon>Chordata</taxon>
        <taxon>Craniata</taxon>
        <taxon>Vertebrata</taxon>
        <taxon>Euteleostomi</taxon>
        <taxon>Mammalia</taxon>
        <taxon>Eutheria</taxon>
        <taxon>Laurasiatheria</taxon>
        <taxon>Artiodactyla</taxon>
        <taxon>Ruminantia</taxon>
        <taxon>Pecora</taxon>
        <taxon>Bovidae</taxon>
        <taxon>Bovinae</taxon>
        <taxon>Bos</taxon>
    </lineage>
</organism>
<reference key="1">
    <citation type="submission" date="2006-04" db="EMBL/GenBank/DDBJ databases">
        <authorList>
            <consortium name="NIH - Mammalian Gene Collection (MGC) project"/>
        </authorList>
    </citation>
    <scope>NUCLEOTIDE SEQUENCE [LARGE SCALE MRNA]</scope>
    <source>
        <strain>Hereford</strain>
        <tissue>Heart ventricle</tissue>
    </source>
</reference>
<evidence type="ECO:0000250" key="1"/>
<evidence type="ECO:0000255" key="2">
    <source>
        <dbReference type="PROSITE-ProRule" id="PRU00176"/>
    </source>
</evidence>
<evidence type="ECO:0000305" key="3"/>
<proteinExistence type="evidence at transcript level"/>
<keyword id="KW-0963">Cytoplasm</keyword>
<keyword id="KW-0539">Nucleus</keyword>
<keyword id="KW-0648">Protein biosynthesis</keyword>
<keyword id="KW-1185">Reference proteome</keyword>
<keyword id="KW-0677">Repeat</keyword>
<keyword id="KW-0694">RNA-binding</keyword>
<sequence>MAASLWMGDLEPYMDENFISRAFATMGETVMSVKIIRNRLTGIPAGYCFVEFADLATAEKCLHKINGKPLPGATPAKRFKLNYATYGKQPDNSPEYSLFVGDLTPDVDDGMLYEFFVKVYPSCRGGKVVLDQTGVSKGYGFVKFTDELEQKRALTECQGAIGLGSKPVRLSVAIPKASRVKPVEYSQMYSYSYNQYYQQYQNYYAQWGYDQNTGSYSYSYPQYGYTQSTMQTYEEVGDDALEDPMPQLDVTEANKEFMEQSEELYDALMDCHWQPLDTVSSEIPAMM</sequence>